<dbReference type="EMBL" id="CP000627">
    <property type="protein sequence ID" value="ABQ20810.1"/>
    <property type="molecule type" value="Genomic_DNA"/>
</dbReference>
<dbReference type="EMBL" id="CP001235">
    <property type="protein sequence ID" value="ACP09834.1"/>
    <property type="molecule type" value="Genomic_DNA"/>
</dbReference>
<dbReference type="RefSeq" id="WP_000983169.1">
    <property type="nucleotide sequence ID" value="NZ_JAACZH010000016.1"/>
</dbReference>
<dbReference type="SMR" id="A5F7G9"/>
<dbReference type="KEGG" id="vco:VC0395_A1323"/>
<dbReference type="KEGG" id="vcr:VC395_1837"/>
<dbReference type="PATRIC" id="fig|345073.21.peg.1780"/>
<dbReference type="eggNOG" id="COG3381">
    <property type="taxonomic scope" value="Bacteria"/>
</dbReference>
<dbReference type="HOGENOM" id="CLU_077650_4_0_6"/>
<dbReference type="OrthoDB" id="7849731at2"/>
<dbReference type="Proteomes" id="UP000000249">
    <property type="component" value="Chromosome 2"/>
</dbReference>
<dbReference type="GO" id="GO:0005737">
    <property type="term" value="C:cytoplasm"/>
    <property type="evidence" value="ECO:0007669"/>
    <property type="project" value="UniProtKB-SubCell"/>
</dbReference>
<dbReference type="GO" id="GO:0051259">
    <property type="term" value="P:protein complex oligomerization"/>
    <property type="evidence" value="ECO:0007669"/>
    <property type="project" value="InterPro"/>
</dbReference>
<dbReference type="GO" id="GO:0006457">
    <property type="term" value="P:protein folding"/>
    <property type="evidence" value="ECO:0007669"/>
    <property type="project" value="UniProtKB-UniRule"/>
</dbReference>
<dbReference type="Gene3D" id="1.20.120.1820">
    <property type="match status" value="1"/>
</dbReference>
<dbReference type="Gene3D" id="1.20.1280.20">
    <property type="entry name" value="HscB, C-terminal domain"/>
    <property type="match status" value="1"/>
</dbReference>
<dbReference type="HAMAP" id="MF_01150">
    <property type="entry name" value="TorD"/>
    <property type="match status" value="1"/>
</dbReference>
<dbReference type="InterPro" id="IPR023069">
    <property type="entry name" value="Chaperone_TorD"/>
</dbReference>
<dbReference type="InterPro" id="IPR020945">
    <property type="entry name" value="DMSO/NO3_reduct_chaperone"/>
</dbReference>
<dbReference type="InterPro" id="IPR036386">
    <property type="entry name" value="HscB_C_sf"/>
</dbReference>
<dbReference type="InterPro" id="IPR036411">
    <property type="entry name" value="TorD-like_sf"/>
</dbReference>
<dbReference type="InterPro" id="IPR050289">
    <property type="entry name" value="TorD/DmsD_chaperones"/>
</dbReference>
<dbReference type="NCBIfam" id="NF003442">
    <property type="entry name" value="PRK04976.1"/>
    <property type="match status" value="1"/>
</dbReference>
<dbReference type="PANTHER" id="PTHR34227:SF11">
    <property type="entry name" value="CHAPERONE PROTEIN TORD"/>
    <property type="match status" value="1"/>
</dbReference>
<dbReference type="PANTHER" id="PTHR34227">
    <property type="entry name" value="CHAPERONE PROTEIN YCDY"/>
    <property type="match status" value="1"/>
</dbReference>
<dbReference type="Pfam" id="PF02613">
    <property type="entry name" value="Nitrate_red_del"/>
    <property type="match status" value="1"/>
</dbReference>
<dbReference type="SUPFAM" id="SSF89155">
    <property type="entry name" value="TorD-like"/>
    <property type="match status" value="1"/>
</dbReference>
<comment type="function">
    <text evidence="1">Involved in the biogenesis of TorA. Acts on TorA before the insertion of the molybdenum cofactor and, as a result, probably favors a conformation of the apoenzyme that is competent for acquiring the cofactor.</text>
</comment>
<comment type="subcellular location">
    <subcellularLocation>
        <location evidence="1">Cytoplasm</location>
    </subcellularLocation>
</comment>
<comment type="similarity">
    <text evidence="1">Belongs to the TorD/DmsD family. TorD subfamily.</text>
</comment>
<sequence length="220" mass="25099">MMQELKILNEKRAEIYWWLSSLFFKELSEQDIARYHSAEVRTFLSGLADEQSLSREVKHLVEALNRLQDRQDAQLELAADFCDLFLKSDRDSALPYASVYTDQGLLNGKPAQQMRELLSAHGVKVEQNLNEPEDHLAIQLDFLAHLAISANQIEHSAQLSLALQAQSDFISQHLLTWLPAFAERCTQFDAFGLYSAAARLALAFIQQDKHCLDELIQETH</sequence>
<proteinExistence type="inferred from homology"/>
<protein>
    <recommendedName>
        <fullName evidence="1">Chaperone protein TorD</fullName>
    </recommendedName>
</protein>
<gene>
    <name evidence="1" type="primary">torD</name>
    <name type="ordered locus">VC0395_A1323</name>
    <name type="ordered locus">VC395_1837</name>
</gene>
<accession>A5F7G9</accession>
<accession>C3M1B8</accession>
<organism>
    <name type="scientific">Vibrio cholerae serotype O1 (strain ATCC 39541 / Classical Ogawa 395 / O395)</name>
    <dbReference type="NCBI Taxonomy" id="345073"/>
    <lineage>
        <taxon>Bacteria</taxon>
        <taxon>Pseudomonadati</taxon>
        <taxon>Pseudomonadota</taxon>
        <taxon>Gammaproteobacteria</taxon>
        <taxon>Vibrionales</taxon>
        <taxon>Vibrionaceae</taxon>
        <taxon>Vibrio</taxon>
    </lineage>
</organism>
<reference key="1">
    <citation type="submission" date="2007-03" db="EMBL/GenBank/DDBJ databases">
        <authorList>
            <person name="Heidelberg J."/>
        </authorList>
    </citation>
    <scope>NUCLEOTIDE SEQUENCE [LARGE SCALE GENOMIC DNA]</scope>
    <source>
        <strain>ATCC 39541 / Classical Ogawa 395 / O395</strain>
    </source>
</reference>
<reference key="2">
    <citation type="journal article" date="2008" name="PLoS ONE">
        <title>A recalibrated molecular clock and independent origins for the cholera pandemic clones.</title>
        <authorList>
            <person name="Feng L."/>
            <person name="Reeves P.R."/>
            <person name="Lan R."/>
            <person name="Ren Y."/>
            <person name="Gao C."/>
            <person name="Zhou Z."/>
            <person name="Ren Y."/>
            <person name="Cheng J."/>
            <person name="Wang W."/>
            <person name="Wang J."/>
            <person name="Qian W."/>
            <person name="Li D."/>
            <person name="Wang L."/>
        </authorList>
    </citation>
    <scope>NUCLEOTIDE SEQUENCE [LARGE SCALE GENOMIC DNA]</scope>
    <source>
        <strain>ATCC 39541 / Classical Ogawa 395 / O395</strain>
    </source>
</reference>
<evidence type="ECO:0000255" key="1">
    <source>
        <dbReference type="HAMAP-Rule" id="MF_01150"/>
    </source>
</evidence>
<name>TORD_VIBC3</name>
<keyword id="KW-0143">Chaperone</keyword>
<keyword id="KW-0963">Cytoplasm</keyword>
<feature type="chain" id="PRO_1000073062" description="Chaperone protein TorD">
    <location>
        <begin position="1"/>
        <end position="220"/>
    </location>
</feature>